<organism>
    <name type="scientific">Erwinia tasmaniensis (strain DSM 17950 / CFBP 7177 / CIP 109463 / NCPPB 4357 / Et1/99)</name>
    <dbReference type="NCBI Taxonomy" id="465817"/>
    <lineage>
        <taxon>Bacteria</taxon>
        <taxon>Pseudomonadati</taxon>
        <taxon>Pseudomonadota</taxon>
        <taxon>Gammaproteobacteria</taxon>
        <taxon>Enterobacterales</taxon>
        <taxon>Erwiniaceae</taxon>
        <taxon>Erwinia</taxon>
    </lineage>
</organism>
<sequence>MFTGLPALSYEQQQQAVERIQQLMAEGMSSGQAIGMVAAEIRENHTGGHVAVMFDEDEEDYMGDNNHDEEEPEEE</sequence>
<comment type="similarity">
    <text evidence="1">Belongs to the UPF0181 family.</text>
</comment>
<evidence type="ECO:0000255" key="1">
    <source>
        <dbReference type="HAMAP-Rule" id="MF_00507"/>
    </source>
</evidence>
<proteinExistence type="inferred from homology"/>
<accession>B2VJ68</accession>
<dbReference type="EMBL" id="CU468135">
    <property type="protein sequence ID" value="CAO96574.1"/>
    <property type="molecule type" value="Genomic_DNA"/>
</dbReference>
<dbReference type="RefSeq" id="WP_012441267.1">
    <property type="nucleotide sequence ID" value="NC_010694.1"/>
</dbReference>
<dbReference type="SMR" id="B2VJ68"/>
<dbReference type="STRING" id="465817.ETA_15280"/>
<dbReference type="KEGG" id="eta:ETA_15280"/>
<dbReference type="eggNOG" id="COG3140">
    <property type="taxonomic scope" value="Bacteria"/>
</dbReference>
<dbReference type="HOGENOM" id="CLU_185263_0_0_6"/>
<dbReference type="OrthoDB" id="6522084at2"/>
<dbReference type="Proteomes" id="UP000001726">
    <property type="component" value="Chromosome"/>
</dbReference>
<dbReference type="HAMAP" id="MF_00507">
    <property type="entry name" value="UPF0181"/>
    <property type="match status" value="1"/>
</dbReference>
<dbReference type="InterPro" id="IPR005371">
    <property type="entry name" value="UPF0181"/>
</dbReference>
<dbReference type="NCBIfam" id="NF003476">
    <property type="entry name" value="PRK05114.1"/>
    <property type="match status" value="1"/>
</dbReference>
<dbReference type="Pfam" id="PF03701">
    <property type="entry name" value="UPF0181"/>
    <property type="match status" value="1"/>
</dbReference>
<name>Y1528_ERWT9</name>
<gene>
    <name type="ordered locus">ETA_15280</name>
</gene>
<protein>
    <recommendedName>
        <fullName evidence="1">UPF0181 protein ETA_15280</fullName>
    </recommendedName>
</protein>
<keyword id="KW-1185">Reference proteome</keyword>
<reference key="1">
    <citation type="journal article" date="2008" name="Environ. Microbiol.">
        <title>The genome of Erwinia tasmaniensis strain Et1/99, a non-pathogenic bacterium in the genus Erwinia.</title>
        <authorList>
            <person name="Kube M."/>
            <person name="Migdoll A.M."/>
            <person name="Mueller I."/>
            <person name="Kuhl H."/>
            <person name="Beck A."/>
            <person name="Reinhardt R."/>
            <person name="Geider K."/>
        </authorList>
    </citation>
    <scope>NUCLEOTIDE SEQUENCE [LARGE SCALE GENOMIC DNA]</scope>
    <source>
        <strain>DSM 17950 / CFBP 7177 / CIP 109463 / NCPPB 4357 / Et1/99</strain>
    </source>
</reference>
<feature type="chain" id="PRO_1000127049" description="UPF0181 protein ETA_15280">
    <location>
        <begin position="1"/>
        <end position="75"/>
    </location>
</feature>